<feature type="chain" id="PRO_0000264803" description="DNA repair protein RecO">
    <location>
        <begin position="1"/>
        <end position="247"/>
    </location>
</feature>
<evidence type="ECO:0000255" key="1">
    <source>
        <dbReference type="HAMAP-Rule" id="MF_00201"/>
    </source>
</evidence>
<gene>
    <name evidence="1" type="primary">recO</name>
    <name type="ordered locus">Mlg_1349</name>
</gene>
<comment type="function">
    <text evidence="1">Involved in DNA repair and RecF pathway recombination.</text>
</comment>
<comment type="similarity">
    <text evidence="1">Belongs to the RecO family.</text>
</comment>
<sequence>MSGDRVLVQPAWVLHRRPWSESSLIVELFSRDFGRIGAVARGGRNSRRWRGLLEPFSPVLASWQGRGELRSLVAAEPDGARPALAGAALASGFYLNELLLRLLRRDDPHPELHPLYGDTLNRLPDEAALRGFECRLLEALGYGLLLLEDMGGEPVHGEAHYRYHLEHGPERLAAVPEAGEGLLVRGRTLLALAGREALAGPSLPEARRLMRAALSLYLGDRPLQSRALYRQLARTPRAATPASPNDH</sequence>
<name>RECO_ALKEH</name>
<accession>Q0A8Y9</accession>
<proteinExistence type="inferred from homology"/>
<keyword id="KW-0227">DNA damage</keyword>
<keyword id="KW-0233">DNA recombination</keyword>
<keyword id="KW-0234">DNA repair</keyword>
<keyword id="KW-1185">Reference proteome</keyword>
<reference key="1">
    <citation type="submission" date="2006-08" db="EMBL/GenBank/DDBJ databases">
        <title>Complete sequence of Alkalilimnicola ehrilichei MLHE-1.</title>
        <authorList>
            <person name="Copeland A."/>
            <person name="Lucas S."/>
            <person name="Lapidus A."/>
            <person name="Barry K."/>
            <person name="Detter J.C."/>
            <person name="Glavina del Rio T."/>
            <person name="Hammon N."/>
            <person name="Israni S."/>
            <person name="Dalin E."/>
            <person name="Tice H."/>
            <person name="Pitluck S."/>
            <person name="Sims D."/>
            <person name="Brettin T."/>
            <person name="Bruce D."/>
            <person name="Han C."/>
            <person name="Tapia R."/>
            <person name="Gilna P."/>
            <person name="Schmutz J."/>
            <person name="Larimer F."/>
            <person name="Land M."/>
            <person name="Hauser L."/>
            <person name="Kyrpides N."/>
            <person name="Mikhailova N."/>
            <person name="Oremland R.S."/>
            <person name="Hoeft S.E."/>
            <person name="Switzer-Blum J."/>
            <person name="Kulp T."/>
            <person name="King G."/>
            <person name="Tabita R."/>
            <person name="Witte B."/>
            <person name="Santini J.M."/>
            <person name="Basu P."/>
            <person name="Hollibaugh J.T."/>
            <person name="Xie G."/>
            <person name="Stolz J.F."/>
            <person name="Richardson P."/>
        </authorList>
    </citation>
    <scope>NUCLEOTIDE SEQUENCE [LARGE SCALE GENOMIC DNA]</scope>
    <source>
        <strain>ATCC BAA-1101 / DSM 17681 / MLHE-1</strain>
    </source>
</reference>
<protein>
    <recommendedName>
        <fullName evidence="1">DNA repair protein RecO</fullName>
    </recommendedName>
    <alternativeName>
        <fullName evidence="1">Recombination protein O</fullName>
    </alternativeName>
</protein>
<dbReference type="EMBL" id="CP000453">
    <property type="protein sequence ID" value="ABI56698.1"/>
    <property type="molecule type" value="Genomic_DNA"/>
</dbReference>
<dbReference type="RefSeq" id="WP_011629093.1">
    <property type="nucleotide sequence ID" value="NC_008340.1"/>
</dbReference>
<dbReference type="SMR" id="Q0A8Y9"/>
<dbReference type="KEGG" id="aeh:Mlg_1349"/>
<dbReference type="eggNOG" id="COG1381">
    <property type="taxonomic scope" value="Bacteria"/>
</dbReference>
<dbReference type="HOGENOM" id="CLU_066645_1_0_6"/>
<dbReference type="OrthoDB" id="9804792at2"/>
<dbReference type="Proteomes" id="UP000001962">
    <property type="component" value="Chromosome"/>
</dbReference>
<dbReference type="GO" id="GO:0043590">
    <property type="term" value="C:bacterial nucleoid"/>
    <property type="evidence" value="ECO:0007669"/>
    <property type="project" value="TreeGrafter"/>
</dbReference>
<dbReference type="GO" id="GO:0006310">
    <property type="term" value="P:DNA recombination"/>
    <property type="evidence" value="ECO:0007669"/>
    <property type="project" value="UniProtKB-UniRule"/>
</dbReference>
<dbReference type="GO" id="GO:0006302">
    <property type="term" value="P:double-strand break repair"/>
    <property type="evidence" value="ECO:0007669"/>
    <property type="project" value="TreeGrafter"/>
</dbReference>
<dbReference type="Gene3D" id="2.40.50.140">
    <property type="entry name" value="Nucleic acid-binding proteins"/>
    <property type="match status" value="1"/>
</dbReference>
<dbReference type="Gene3D" id="1.20.1440.120">
    <property type="entry name" value="Recombination protein O, C-terminal domain"/>
    <property type="match status" value="1"/>
</dbReference>
<dbReference type="HAMAP" id="MF_00201">
    <property type="entry name" value="RecO"/>
    <property type="match status" value="1"/>
</dbReference>
<dbReference type="InterPro" id="IPR022572">
    <property type="entry name" value="DNA_rep/recomb_RecO_N"/>
</dbReference>
<dbReference type="InterPro" id="IPR012340">
    <property type="entry name" value="NA-bd_OB-fold"/>
</dbReference>
<dbReference type="InterPro" id="IPR003717">
    <property type="entry name" value="RecO"/>
</dbReference>
<dbReference type="InterPro" id="IPR042242">
    <property type="entry name" value="RecO_C"/>
</dbReference>
<dbReference type="NCBIfam" id="TIGR00613">
    <property type="entry name" value="reco"/>
    <property type="match status" value="1"/>
</dbReference>
<dbReference type="PANTHER" id="PTHR33991">
    <property type="entry name" value="DNA REPAIR PROTEIN RECO"/>
    <property type="match status" value="1"/>
</dbReference>
<dbReference type="PANTHER" id="PTHR33991:SF1">
    <property type="entry name" value="DNA REPAIR PROTEIN RECO"/>
    <property type="match status" value="1"/>
</dbReference>
<dbReference type="Pfam" id="PF02565">
    <property type="entry name" value="RecO_C"/>
    <property type="match status" value="1"/>
</dbReference>
<dbReference type="Pfam" id="PF11967">
    <property type="entry name" value="RecO_N"/>
    <property type="match status" value="1"/>
</dbReference>
<dbReference type="SUPFAM" id="SSF50249">
    <property type="entry name" value="Nucleic acid-binding proteins"/>
    <property type="match status" value="1"/>
</dbReference>
<organism>
    <name type="scientific">Alkalilimnicola ehrlichii (strain ATCC BAA-1101 / DSM 17681 / MLHE-1)</name>
    <dbReference type="NCBI Taxonomy" id="187272"/>
    <lineage>
        <taxon>Bacteria</taxon>
        <taxon>Pseudomonadati</taxon>
        <taxon>Pseudomonadota</taxon>
        <taxon>Gammaproteobacteria</taxon>
        <taxon>Chromatiales</taxon>
        <taxon>Ectothiorhodospiraceae</taxon>
        <taxon>Alkalilimnicola</taxon>
    </lineage>
</organism>